<accession>P04946</accession>
<dbReference type="EMBL" id="K00745">
    <property type="protein sequence ID" value="AAA38690.1"/>
    <property type="molecule type" value="mRNA"/>
</dbReference>
<dbReference type="FunCoup" id="P04946">
    <property type="interactions" value="621"/>
</dbReference>
<dbReference type="InParanoid" id="P04946"/>
<dbReference type="Proteomes" id="UP000000589">
    <property type="component" value="Unplaced"/>
</dbReference>
<dbReference type="RNAct" id="P04946">
    <property type="molecule type" value="protein"/>
</dbReference>
<dbReference type="GO" id="GO:0019814">
    <property type="term" value="C:immunoglobulin complex"/>
    <property type="evidence" value="ECO:0000318"/>
    <property type="project" value="GO_Central"/>
</dbReference>
<dbReference type="GO" id="GO:0002250">
    <property type="term" value="P:adaptive immune response"/>
    <property type="evidence" value="ECO:0007669"/>
    <property type="project" value="UniProtKB-KW"/>
</dbReference>
<dbReference type="GO" id="GO:0006955">
    <property type="term" value="P:immune response"/>
    <property type="evidence" value="ECO:0000318"/>
    <property type="project" value="GO_Central"/>
</dbReference>
<dbReference type="CDD" id="cd04980">
    <property type="entry name" value="IgV_L_kappa"/>
    <property type="match status" value="1"/>
</dbReference>
<dbReference type="FunFam" id="2.60.40.10:FF:000212">
    <property type="entry name" value="Immunoglobulin kappa chain variable 12-38"/>
    <property type="match status" value="1"/>
</dbReference>
<dbReference type="Gene3D" id="2.60.40.10">
    <property type="entry name" value="Immunoglobulins"/>
    <property type="match status" value="1"/>
</dbReference>
<dbReference type="InterPro" id="IPR007110">
    <property type="entry name" value="Ig-like_dom"/>
</dbReference>
<dbReference type="InterPro" id="IPR036179">
    <property type="entry name" value="Ig-like_dom_sf"/>
</dbReference>
<dbReference type="InterPro" id="IPR013783">
    <property type="entry name" value="Ig-like_fold"/>
</dbReference>
<dbReference type="InterPro" id="IPR003599">
    <property type="entry name" value="Ig_sub"/>
</dbReference>
<dbReference type="InterPro" id="IPR013106">
    <property type="entry name" value="Ig_V-set"/>
</dbReference>
<dbReference type="InterPro" id="IPR050150">
    <property type="entry name" value="IgV_Light_Chain"/>
</dbReference>
<dbReference type="PANTHER" id="PTHR23267">
    <property type="entry name" value="IMMUNOGLOBULIN LIGHT CHAIN"/>
    <property type="match status" value="1"/>
</dbReference>
<dbReference type="Pfam" id="PF07686">
    <property type="entry name" value="V-set"/>
    <property type="match status" value="1"/>
</dbReference>
<dbReference type="SMART" id="SM00409">
    <property type="entry name" value="IG"/>
    <property type="match status" value="1"/>
</dbReference>
<dbReference type="SMART" id="SM00406">
    <property type="entry name" value="IGv"/>
    <property type="match status" value="1"/>
</dbReference>
<dbReference type="SUPFAM" id="SSF48726">
    <property type="entry name" value="Immunoglobulin"/>
    <property type="match status" value="1"/>
</dbReference>
<dbReference type="PROSITE" id="PS50835">
    <property type="entry name" value="IG_LIKE"/>
    <property type="match status" value="1"/>
</dbReference>
<reference key="1">
    <citation type="journal article" date="1983" name="Nature">
        <title>mRNA sequences define an unusually restricted IgG response to 2-phenyloxazolone and its early diversification.</title>
        <authorList>
            <person name="Kaartinen M."/>
            <person name="Griffiths G.M."/>
            <person name="Markham A.F."/>
            <person name="Milstein C."/>
        </authorList>
    </citation>
    <scope>NUCLEOTIDE SEQUENCE [MRNA]</scope>
</reference>
<name>KV5AM_MOUSE</name>
<feature type="chain" id="PRO_0000059809" description="Ig kappa chain V-V region NQ5-89.4">
    <location>
        <begin position="1"/>
        <end position="108" status="greater than"/>
    </location>
</feature>
<feature type="region of interest" description="Framework-1">
    <location>
        <begin position="1"/>
        <end position="23"/>
    </location>
</feature>
<feature type="region of interest" description="Complementarity-determining-1">
    <location>
        <begin position="24"/>
        <end position="34"/>
    </location>
</feature>
<feature type="region of interest" description="Framework-2">
    <location>
        <begin position="35"/>
        <end position="49"/>
    </location>
</feature>
<feature type="region of interest" description="Complementarity-determining-2">
    <location>
        <begin position="50"/>
        <end position="56"/>
    </location>
</feature>
<feature type="region of interest" description="Framework-3">
    <location>
        <begin position="57"/>
        <end position="88"/>
    </location>
</feature>
<feature type="region of interest" description="Complementarity-determining-3">
    <location>
        <begin position="89"/>
        <end position="97"/>
    </location>
</feature>
<feature type="region of interest" description="Framework-4">
    <location>
        <begin position="98"/>
        <end position="107"/>
    </location>
</feature>
<feature type="disulfide bond" evidence="1">
    <location>
        <begin position="23"/>
        <end position="88"/>
    </location>
</feature>
<feature type="non-terminal residue">
    <location>
        <position position="108"/>
    </location>
</feature>
<organism>
    <name type="scientific">Mus musculus</name>
    <name type="common">Mouse</name>
    <dbReference type="NCBI Taxonomy" id="10090"/>
    <lineage>
        <taxon>Eukaryota</taxon>
        <taxon>Metazoa</taxon>
        <taxon>Chordata</taxon>
        <taxon>Craniata</taxon>
        <taxon>Vertebrata</taxon>
        <taxon>Euteleostomi</taxon>
        <taxon>Mammalia</taxon>
        <taxon>Eutheria</taxon>
        <taxon>Euarchontoglires</taxon>
        <taxon>Glires</taxon>
        <taxon>Rodentia</taxon>
        <taxon>Myomorpha</taxon>
        <taxon>Muroidea</taxon>
        <taxon>Muridae</taxon>
        <taxon>Murinae</taxon>
        <taxon>Mus</taxon>
        <taxon>Mus</taxon>
    </lineage>
</organism>
<keyword id="KW-1064">Adaptive immunity</keyword>
<keyword id="KW-1015">Disulfide bond</keyword>
<keyword id="KW-0374">Hybridoma</keyword>
<keyword id="KW-0391">Immunity</keyword>
<keyword id="KW-1280">Immunoglobulin</keyword>
<keyword id="KW-1185">Reference proteome</keyword>
<evidence type="ECO:0000255" key="1">
    <source>
        <dbReference type="PROSITE-ProRule" id="PRU00114"/>
    </source>
</evidence>
<proteinExistence type="evidence at transcript level"/>
<sequence length="108" mass="11870">DIQMTQTTSSLSASLGHRVTITCSASQDISNYLNWYQQKPDGTVKLLIYYTSRLHSGVPSRFSGSGSATDYSLTITNLQQEDXATYXCQQGNTLPYTFGGGTKLXIKR</sequence>
<protein>
    <recommendedName>
        <fullName>Ig kappa chain V-V region NQ5-89.4</fullName>
    </recommendedName>
</protein>
<comment type="function">
    <text>Anti-2-phenyl oxazolone (PHOX) Antibody.</text>
</comment>